<sequence length="60" mass="6442">MAQIKITLTKSPIGRKPEQRKTVVALGLGKLNSSVVKEDNAAIRGMVTAISHLVTVEDVK</sequence>
<comment type="subunit">
    <text evidence="1">Part of the 50S ribosomal subunit.</text>
</comment>
<comment type="similarity">
    <text evidence="1">Belongs to the universal ribosomal protein uL30 family.</text>
</comment>
<proteinExistence type="inferred from homology"/>
<feature type="chain" id="PRO_0000273870" description="Large ribosomal subunit protein uL30">
    <location>
        <begin position="1"/>
        <end position="60"/>
    </location>
</feature>
<protein>
    <recommendedName>
        <fullName evidence="1">Large ribosomal subunit protein uL30</fullName>
    </recommendedName>
    <alternativeName>
        <fullName evidence="2">50S ribosomal protein L30</fullName>
    </alternativeName>
</protein>
<gene>
    <name evidence="1" type="primary">rpmD</name>
    <name type="ordered locus">MGAS9429_Spy0062</name>
</gene>
<accession>Q1JNZ9</accession>
<reference key="1">
    <citation type="journal article" date="2006" name="Proc. Natl. Acad. Sci. U.S.A.">
        <title>Molecular genetic anatomy of inter- and intraserotype variation in the human bacterial pathogen group A Streptococcus.</title>
        <authorList>
            <person name="Beres S.B."/>
            <person name="Richter E.W."/>
            <person name="Nagiec M.J."/>
            <person name="Sumby P."/>
            <person name="Porcella S.F."/>
            <person name="DeLeo F.R."/>
            <person name="Musser J.M."/>
        </authorList>
    </citation>
    <scope>NUCLEOTIDE SEQUENCE [LARGE SCALE GENOMIC DNA]</scope>
    <source>
        <strain>MGAS9429</strain>
    </source>
</reference>
<organism>
    <name type="scientific">Streptococcus pyogenes serotype M12 (strain MGAS9429)</name>
    <dbReference type="NCBI Taxonomy" id="370551"/>
    <lineage>
        <taxon>Bacteria</taxon>
        <taxon>Bacillati</taxon>
        <taxon>Bacillota</taxon>
        <taxon>Bacilli</taxon>
        <taxon>Lactobacillales</taxon>
        <taxon>Streptococcaceae</taxon>
        <taxon>Streptococcus</taxon>
    </lineage>
</organism>
<dbReference type="EMBL" id="CP000259">
    <property type="protein sequence ID" value="ABF31250.1"/>
    <property type="molecule type" value="Genomic_DNA"/>
</dbReference>
<dbReference type="RefSeq" id="WP_002986624.1">
    <property type="nucleotide sequence ID" value="NC_008021.1"/>
</dbReference>
<dbReference type="SMR" id="Q1JNZ9"/>
<dbReference type="GeneID" id="69900044"/>
<dbReference type="KEGG" id="spk:MGAS9429_Spy0062"/>
<dbReference type="HOGENOM" id="CLU_131047_2_1_9"/>
<dbReference type="Proteomes" id="UP000002433">
    <property type="component" value="Chromosome"/>
</dbReference>
<dbReference type="GO" id="GO:0022625">
    <property type="term" value="C:cytosolic large ribosomal subunit"/>
    <property type="evidence" value="ECO:0007669"/>
    <property type="project" value="TreeGrafter"/>
</dbReference>
<dbReference type="GO" id="GO:0003735">
    <property type="term" value="F:structural constituent of ribosome"/>
    <property type="evidence" value="ECO:0007669"/>
    <property type="project" value="InterPro"/>
</dbReference>
<dbReference type="GO" id="GO:0006412">
    <property type="term" value="P:translation"/>
    <property type="evidence" value="ECO:0007669"/>
    <property type="project" value="UniProtKB-UniRule"/>
</dbReference>
<dbReference type="CDD" id="cd01658">
    <property type="entry name" value="Ribosomal_L30"/>
    <property type="match status" value="1"/>
</dbReference>
<dbReference type="FunFam" id="3.30.1390.20:FF:000001">
    <property type="entry name" value="50S ribosomal protein L30"/>
    <property type="match status" value="1"/>
</dbReference>
<dbReference type="Gene3D" id="3.30.1390.20">
    <property type="entry name" value="Ribosomal protein L30, ferredoxin-like fold domain"/>
    <property type="match status" value="1"/>
</dbReference>
<dbReference type="HAMAP" id="MF_01371_B">
    <property type="entry name" value="Ribosomal_uL30_B"/>
    <property type="match status" value="1"/>
</dbReference>
<dbReference type="InterPro" id="IPR036919">
    <property type="entry name" value="Ribo_uL30_ferredoxin-like_sf"/>
</dbReference>
<dbReference type="InterPro" id="IPR005996">
    <property type="entry name" value="Ribosomal_uL30_bac-type"/>
</dbReference>
<dbReference type="InterPro" id="IPR018038">
    <property type="entry name" value="Ribosomal_uL30_CS"/>
</dbReference>
<dbReference type="InterPro" id="IPR016082">
    <property type="entry name" value="Ribosomal_uL30_ferredoxin-like"/>
</dbReference>
<dbReference type="NCBIfam" id="TIGR01308">
    <property type="entry name" value="rpmD_bact"/>
    <property type="match status" value="1"/>
</dbReference>
<dbReference type="PANTHER" id="PTHR15892:SF2">
    <property type="entry name" value="LARGE RIBOSOMAL SUBUNIT PROTEIN UL30M"/>
    <property type="match status" value="1"/>
</dbReference>
<dbReference type="PANTHER" id="PTHR15892">
    <property type="entry name" value="MITOCHONDRIAL RIBOSOMAL PROTEIN L30"/>
    <property type="match status" value="1"/>
</dbReference>
<dbReference type="Pfam" id="PF00327">
    <property type="entry name" value="Ribosomal_L30"/>
    <property type="match status" value="1"/>
</dbReference>
<dbReference type="PIRSF" id="PIRSF002211">
    <property type="entry name" value="Ribosomal_L30_bac-type"/>
    <property type="match status" value="1"/>
</dbReference>
<dbReference type="SUPFAM" id="SSF55129">
    <property type="entry name" value="Ribosomal protein L30p/L7e"/>
    <property type="match status" value="1"/>
</dbReference>
<dbReference type="PROSITE" id="PS00634">
    <property type="entry name" value="RIBOSOMAL_L30"/>
    <property type="match status" value="1"/>
</dbReference>
<keyword id="KW-0687">Ribonucleoprotein</keyword>
<keyword id="KW-0689">Ribosomal protein</keyword>
<evidence type="ECO:0000255" key="1">
    <source>
        <dbReference type="HAMAP-Rule" id="MF_01371"/>
    </source>
</evidence>
<evidence type="ECO:0000305" key="2"/>
<name>RL30_STRPC</name>